<proteinExistence type="inferred from homology"/>
<name>CLPP_SHIBS</name>
<reference key="1">
    <citation type="journal article" date="2005" name="Nucleic Acids Res.">
        <title>Genome dynamics and diversity of Shigella species, the etiologic agents of bacillary dysentery.</title>
        <authorList>
            <person name="Yang F."/>
            <person name="Yang J."/>
            <person name="Zhang X."/>
            <person name="Chen L."/>
            <person name="Jiang Y."/>
            <person name="Yan Y."/>
            <person name="Tang X."/>
            <person name="Wang J."/>
            <person name="Xiong Z."/>
            <person name="Dong J."/>
            <person name="Xue Y."/>
            <person name="Zhu Y."/>
            <person name="Xu X."/>
            <person name="Sun L."/>
            <person name="Chen S."/>
            <person name="Nie H."/>
            <person name="Peng J."/>
            <person name="Xu J."/>
            <person name="Wang Y."/>
            <person name="Yuan Z."/>
            <person name="Wen Y."/>
            <person name="Yao Z."/>
            <person name="Shen Y."/>
            <person name="Qiang B."/>
            <person name="Hou Y."/>
            <person name="Yu J."/>
            <person name="Jin Q."/>
        </authorList>
    </citation>
    <scope>NUCLEOTIDE SEQUENCE [LARGE SCALE GENOMIC DNA]</scope>
    <source>
        <strain>Sb227</strain>
    </source>
</reference>
<sequence>MSYSGERDNFAPHMALVPMVIEQTSRGERSFDIYSRLLKERVIFLTGQVEDHMANLIVAQMLFLEAENPEKDIYLYINSPGGVITAGMSIYDTMQFIKPDVSTICMGQAASMGAFLLTAGAKGKRFCLPNSRVMIHQPLGGYQGQATDIEIHAREILKVKGRMNELMALHTGQSLEQIERDTERDRFLSAPEAVEYGLVDSILTHRN</sequence>
<feature type="chain" id="PRO_0000226467" description="ATP-dependent Clp protease proteolytic subunit">
    <location>
        <begin position="1"/>
        <end position="207"/>
    </location>
</feature>
<feature type="active site" description="Nucleophile" evidence="1">
    <location>
        <position position="111"/>
    </location>
</feature>
<feature type="active site" evidence="1">
    <location>
        <position position="136"/>
    </location>
</feature>
<dbReference type="EC" id="3.4.21.92" evidence="1"/>
<dbReference type="EMBL" id="CP000036">
    <property type="protein sequence ID" value="ABB65044.1"/>
    <property type="molecule type" value="Genomic_DNA"/>
</dbReference>
<dbReference type="RefSeq" id="WP_000122253.1">
    <property type="nucleotide sequence ID" value="NC_007613.1"/>
</dbReference>
<dbReference type="SMR" id="Q325G4"/>
<dbReference type="MEROPS" id="S14.001"/>
<dbReference type="GeneID" id="93777017"/>
<dbReference type="KEGG" id="sbo:SBO_0331"/>
<dbReference type="HOGENOM" id="CLU_058707_3_2_6"/>
<dbReference type="Proteomes" id="UP000007067">
    <property type="component" value="Chromosome"/>
</dbReference>
<dbReference type="GO" id="GO:0005737">
    <property type="term" value="C:cytoplasm"/>
    <property type="evidence" value="ECO:0007669"/>
    <property type="project" value="UniProtKB-SubCell"/>
</dbReference>
<dbReference type="GO" id="GO:0009368">
    <property type="term" value="C:endopeptidase Clp complex"/>
    <property type="evidence" value="ECO:0007669"/>
    <property type="project" value="TreeGrafter"/>
</dbReference>
<dbReference type="GO" id="GO:0004176">
    <property type="term" value="F:ATP-dependent peptidase activity"/>
    <property type="evidence" value="ECO:0007669"/>
    <property type="project" value="InterPro"/>
</dbReference>
<dbReference type="GO" id="GO:0051117">
    <property type="term" value="F:ATPase binding"/>
    <property type="evidence" value="ECO:0007669"/>
    <property type="project" value="TreeGrafter"/>
</dbReference>
<dbReference type="GO" id="GO:0004252">
    <property type="term" value="F:serine-type endopeptidase activity"/>
    <property type="evidence" value="ECO:0007669"/>
    <property type="project" value="UniProtKB-UniRule"/>
</dbReference>
<dbReference type="GO" id="GO:0006515">
    <property type="term" value="P:protein quality control for misfolded or incompletely synthesized proteins"/>
    <property type="evidence" value="ECO:0007669"/>
    <property type="project" value="TreeGrafter"/>
</dbReference>
<dbReference type="CDD" id="cd07017">
    <property type="entry name" value="S14_ClpP_2"/>
    <property type="match status" value="1"/>
</dbReference>
<dbReference type="FunFam" id="3.90.226.10:FF:000001">
    <property type="entry name" value="ATP-dependent Clp protease proteolytic subunit"/>
    <property type="match status" value="1"/>
</dbReference>
<dbReference type="Gene3D" id="3.90.226.10">
    <property type="entry name" value="2-enoyl-CoA Hydratase, Chain A, domain 1"/>
    <property type="match status" value="1"/>
</dbReference>
<dbReference type="HAMAP" id="MF_00444">
    <property type="entry name" value="ClpP"/>
    <property type="match status" value="1"/>
</dbReference>
<dbReference type="InterPro" id="IPR001907">
    <property type="entry name" value="ClpP"/>
</dbReference>
<dbReference type="InterPro" id="IPR029045">
    <property type="entry name" value="ClpP/crotonase-like_dom_sf"/>
</dbReference>
<dbReference type="InterPro" id="IPR023562">
    <property type="entry name" value="ClpP/TepA"/>
</dbReference>
<dbReference type="InterPro" id="IPR033135">
    <property type="entry name" value="ClpP_His_AS"/>
</dbReference>
<dbReference type="InterPro" id="IPR018215">
    <property type="entry name" value="ClpP_Ser_AS"/>
</dbReference>
<dbReference type="NCBIfam" id="TIGR00493">
    <property type="entry name" value="clpP"/>
    <property type="match status" value="1"/>
</dbReference>
<dbReference type="NCBIfam" id="NF001368">
    <property type="entry name" value="PRK00277.1"/>
    <property type="match status" value="1"/>
</dbReference>
<dbReference type="NCBIfam" id="NF009205">
    <property type="entry name" value="PRK12553.1"/>
    <property type="match status" value="1"/>
</dbReference>
<dbReference type="PANTHER" id="PTHR10381">
    <property type="entry name" value="ATP-DEPENDENT CLP PROTEASE PROTEOLYTIC SUBUNIT"/>
    <property type="match status" value="1"/>
</dbReference>
<dbReference type="PANTHER" id="PTHR10381:SF70">
    <property type="entry name" value="ATP-DEPENDENT CLP PROTEASE PROTEOLYTIC SUBUNIT"/>
    <property type="match status" value="1"/>
</dbReference>
<dbReference type="Pfam" id="PF00574">
    <property type="entry name" value="CLP_protease"/>
    <property type="match status" value="1"/>
</dbReference>
<dbReference type="PRINTS" id="PR00127">
    <property type="entry name" value="CLPPROTEASEP"/>
</dbReference>
<dbReference type="SUPFAM" id="SSF52096">
    <property type="entry name" value="ClpP/crotonase"/>
    <property type="match status" value="1"/>
</dbReference>
<dbReference type="PROSITE" id="PS00382">
    <property type="entry name" value="CLP_PROTEASE_HIS"/>
    <property type="match status" value="1"/>
</dbReference>
<dbReference type="PROSITE" id="PS00381">
    <property type="entry name" value="CLP_PROTEASE_SER"/>
    <property type="match status" value="1"/>
</dbReference>
<comment type="function">
    <text evidence="1">Cleaves peptides in various proteins in a process that requires ATP hydrolysis. Has a chymotrypsin-like activity. Plays a major role in the degradation of misfolded proteins.</text>
</comment>
<comment type="catalytic activity">
    <reaction evidence="1">
        <text>Hydrolysis of proteins to small peptides in the presence of ATP and magnesium. alpha-casein is the usual test substrate. In the absence of ATP, only oligopeptides shorter than five residues are hydrolyzed (such as succinyl-Leu-Tyr-|-NHMec, and Leu-Tyr-Leu-|-Tyr-Trp, in which cleavage of the -Tyr-|-Leu- and -Tyr-|-Trp bonds also occurs).</text>
        <dbReference type="EC" id="3.4.21.92"/>
    </reaction>
</comment>
<comment type="subunit">
    <text evidence="1">Fourteen ClpP subunits assemble into 2 heptameric rings which stack back to back to give a disk-like structure with a central cavity, resembling the structure of eukaryotic proteasomes. Component of the ClpAP and ClpXP complexes.</text>
</comment>
<comment type="subcellular location">
    <subcellularLocation>
        <location evidence="1">Cytoplasm</location>
    </subcellularLocation>
</comment>
<comment type="similarity">
    <text evidence="1">Belongs to the peptidase S14 family.</text>
</comment>
<keyword id="KW-0963">Cytoplasm</keyword>
<keyword id="KW-0378">Hydrolase</keyword>
<keyword id="KW-0645">Protease</keyword>
<keyword id="KW-0720">Serine protease</keyword>
<organism>
    <name type="scientific">Shigella boydii serotype 4 (strain Sb227)</name>
    <dbReference type="NCBI Taxonomy" id="300268"/>
    <lineage>
        <taxon>Bacteria</taxon>
        <taxon>Pseudomonadati</taxon>
        <taxon>Pseudomonadota</taxon>
        <taxon>Gammaproteobacteria</taxon>
        <taxon>Enterobacterales</taxon>
        <taxon>Enterobacteriaceae</taxon>
        <taxon>Shigella</taxon>
    </lineage>
</organism>
<protein>
    <recommendedName>
        <fullName evidence="1">ATP-dependent Clp protease proteolytic subunit</fullName>
        <ecNumber evidence="1">3.4.21.92</ecNumber>
    </recommendedName>
    <alternativeName>
        <fullName evidence="1">Endopeptidase Clp</fullName>
    </alternativeName>
</protein>
<accession>Q325G4</accession>
<evidence type="ECO:0000255" key="1">
    <source>
        <dbReference type="HAMAP-Rule" id="MF_00444"/>
    </source>
</evidence>
<gene>
    <name evidence="1" type="primary">clpP</name>
    <name type="ordered locus">SBO_0331</name>
</gene>